<accession>A6VPG9</accession>
<keyword id="KW-0460">Magnesium</keyword>
<keyword id="KW-0479">Metal-binding</keyword>
<keyword id="KW-1185">Reference proteome</keyword>
<keyword id="KW-0784">Thiamine biosynthesis</keyword>
<keyword id="KW-0808">Transferase</keyword>
<name>THIE_ACTSZ</name>
<protein>
    <recommendedName>
        <fullName evidence="1">Thiamine-phosphate synthase</fullName>
        <shortName evidence="1">TP synthase</shortName>
        <shortName evidence="1">TPS</shortName>
        <ecNumber evidence="1">2.5.1.3</ecNumber>
    </recommendedName>
    <alternativeName>
        <fullName evidence="1">Thiamine-phosphate pyrophosphorylase</fullName>
        <shortName evidence="1">TMP pyrophosphorylase</shortName>
        <shortName evidence="1">TMP-PPase</shortName>
    </alternativeName>
</protein>
<proteinExistence type="inferred from homology"/>
<gene>
    <name evidence="1" type="primary">thiE</name>
    <name type="ordered locus">Asuc_1508</name>
</gene>
<evidence type="ECO:0000255" key="1">
    <source>
        <dbReference type="HAMAP-Rule" id="MF_00097"/>
    </source>
</evidence>
<dbReference type="EC" id="2.5.1.3" evidence="1"/>
<dbReference type="EMBL" id="CP000746">
    <property type="protein sequence ID" value="ABR74866.1"/>
    <property type="molecule type" value="Genomic_DNA"/>
</dbReference>
<dbReference type="RefSeq" id="WP_012073243.1">
    <property type="nucleotide sequence ID" value="NC_009655.1"/>
</dbReference>
<dbReference type="SMR" id="A6VPG9"/>
<dbReference type="STRING" id="339671.Asuc_1508"/>
<dbReference type="KEGG" id="asu:Asuc_1508"/>
<dbReference type="eggNOG" id="COG0352">
    <property type="taxonomic scope" value="Bacteria"/>
</dbReference>
<dbReference type="HOGENOM" id="CLU_018272_3_2_6"/>
<dbReference type="OrthoDB" id="9810880at2"/>
<dbReference type="UniPathway" id="UPA00060">
    <property type="reaction ID" value="UER00141"/>
</dbReference>
<dbReference type="Proteomes" id="UP000001114">
    <property type="component" value="Chromosome"/>
</dbReference>
<dbReference type="GO" id="GO:0005737">
    <property type="term" value="C:cytoplasm"/>
    <property type="evidence" value="ECO:0007669"/>
    <property type="project" value="TreeGrafter"/>
</dbReference>
<dbReference type="GO" id="GO:0000287">
    <property type="term" value="F:magnesium ion binding"/>
    <property type="evidence" value="ECO:0007669"/>
    <property type="project" value="UniProtKB-UniRule"/>
</dbReference>
<dbReference type="GO" id="GO:0004789">
    <property type="term" value="F:thiamine-phosphate diphosphorylase activity"/>
    <property type="evidence" value="ECO:0007669"/>
    <property type="project" value="UniProtKB-UniRule"/>
</dbReference>
<dbReference type="GO" id="GO:0009228">
    <property type="term" value="P:thiamine biosynthetic process"/>
    <property type="evidence" value="ECO:0007669"/>
    <property type="project" value="UniProtKB-KW"/>
</dbReference>
<dbReference type="GO" id="GO:0009229">
    <property type="term" value="P:thiamine diphosphate biosynthetic process"/>
    <property type="evidence" value="ECO:0007669"/>
    <property type="project" value="UniProtKB-UniRule"/>
</dbReference>
<dbReference type="CDD" id="cd00564">
    <property type="entry name" value="TMP_TenI"/>
    <property type="match status" value="1"/>
</dbReference>
<dbReference type="FunFam" id="3.20.20.70:FF:000096">
    <property type="entry name" value="Thiamine-phosphate synthase"/>
    <property type="match status" value="1"/>
</dbReference>
<dbReference type="Gene3D" id="3.20.20.70">
    <property type="entry name" value="Aldolase class I"/>
    <property type="match status" value="1"/>
</dbReference>
<dbReference type="HAMAP" id="MF_00097">
    <property type="entry name" value="TMP_synthase"/>
    <property type="match status" value="1"/>
</dbReference>
<dbReference type="InterPro" id="IPR013785">
    <property type="entry name" value="Aldolase_TIM"/>
</dbReference>
<dbReference type="InterPro" id="IPR036206">
    <property type="entry name" value="ThiamineP_synth_sf"/>
</dbReference>
<dbReference type="InterPro" id="IPR022998">
    <property type="entry name" value="ThiamineP_synth_TenI"/>
</dbReference>
<dbReference type="InterPro" id="IPR034291">
    <property type="entry name" value="TMP_synthase"/>
</dbReference>
<dbReference type="NCBIfam" id="TIGR00693">
    <property type="entry name" value="thiE"/>
    <property type="match status" value="1"/>
</dbReference>
<dbReference type="PANTHER" id="PTHR20857">
    <property type="entry name" value="THIAMINE-PHOSPHATE PYROPHOSPHORYLASE"/>
    <property type="match status" value="1"/>
</dbReference>
<dbReference type="PANTHER" id="PTHR20857:SF15">
    <property type="entry name" value="THIAMINE-PHOSPHATE SYNTHASE"/>
    <property type="match status" value="1"/>
</dbReference>
<dbReference type="Pfam" id="PF02581">
    <property type="entry name" value="TMP-TENI"/>
    <property type="match status" value="1"/>
</dbReference>
<dbReference type="SUPFAM" id="SSF51391">
    <property type="entry name" value="Thiamin phosphate synthase"/>
    <property type="match status" value="1"/>
</dbReference>
<sequence length="221" mass="24262">MNKIKSMLSVYFIAGSQDCRHLPGSPVENLLNILQQALEAGITCFQFREKGERSLAQNPQLKHRLALQCQQLCRQFNVPFIINDDIGLALAIRADGIHVGQKDTAVERILSRADYRPIIGLSINTLEQAQANKERLGIDYFGIGPIFATQSKADHAPAVGMEFIRQIHELGIDKPCVAIGGIHEDNTAEIRRLGANGVAVISAITRSNDIARTVQNLACHS</sequence>
<feature type="chain" id="PRO_1000071282" description="Thiamine-phosphate synthase">
    <location>
        <begin position="1"/>
        <end position="221"/>
    </location>
</feature>
<feature type="binding site" evidence="1">
    <location>
        <begin position="46"/>
        <end position="50"/>
    </location>
    <ligand>
        <name>4-amino-2-methyl-5-(diphosphooxymethyl)pyrimidine</name>
        <dbReference type="ChEBI" id="CHEBI:57841"/>
    </ligand>
</feature>
<feature type="binding site" evidence="1">
    <location>
        <position position="83"/>
    </location>
    <ligand>
        <name>4-amino-2-methyl-5-(diphosphooxymethyl)pyrimidine</name>
        <dbReference type="ChEBI" id="CHEBI:57841"/>
    </ligand>
</feature>
<feature type="binding site" evidence="1">
    <location>
        <position position="84"/>
    </location>
    <ligand>
        <name>Mg(2+)</name>
        <dbReference type="ChEBI" id="CHEBI:18420"/>
    </ligand>
</feature>
<feature type="binding site" evidence="1">
    <location>
        <position position="103"/>
    </location>
    <ligand>
        <name>Mg(2+)</name>
        <dbReference type="ChEBI" id="CHEBI:18420"/>
    </ligand>
</feature>
<feature type="binding site" evidence="1">
    <location>
        <position position="122"/>
    </location>
    <ligand>
        <name>4-amino-2-methyl-5-(diphosphooxymethyl)pyrimidine</name>
        <dbReference type="ChEBI" id="CHEBI:57841"/>
    </ligand>
</feature>
<feature type="binding site" evidence="1">
    <location>
        <begin position="149"/>
        <end position="151"/>
    </location>
    <ligand>
        <name>2-[(2R,5Z)-2-carboxy-4-methylthiazol-5(2H)-ylidene]ethyl phosphate</name>
        <dbReference type="ChEBI" id="CHEBI:62899"/>
    </ligand>
</feature>
<feature type="binding site" evidence="1">
    <location>
        <position position="152"/>
    </location>
    <ligand>
        <name>4-amino-2-methyl-5-(diphosphooxymethyl)pyrimidine</name>
        <dbReference type="ChEBI" id="CHEBI:57841"/>
    </ligand>
</feature>
<feature type="binding site" evidence="1">
    <location>
        <position position="181"/>
    </location>
    <ligand>
        <name>2-[(2R,5Z)-2-carboxy-4-methylthiazol-5(2H)-ylidene]ethyl phosphate</name>
        <dbReference type="ChEBI" id="CHEBI:62899"/>
    </ligand>
</feature>
<feature type="binding site" evidence="1">
    <location>
        <begin position="201"/>
        <end position="202"/>
    </location>
    <ligand>
        <name>2-[(2R,5Z)-2-carboxy-4-methylthiazol-5(2H)-ylidene]ethyl phosphate</name>
        <dbReference type="ChEBI" id="CHEBI:62899"/>
    </ligand>
</feature>
<comment type="function">
    <text evidence="1">Condenses 4-methyl-5-(beta-hydroxyethyl)thiazole monophosphate (THZ-P) and 2-methyl-4-amino-5-hydroxymethyl pyrimidine pyrophosphate (HMP-PP) to form thiamine monophosphate (TMP).</text>
</comment>
<comment type="catalytic activity">
    <reaction evidence="1">
        <text>2-[(2R,5Z)-2-carboxy-4-methylthiazol-5(2H)-ylidene]ethyl phosphate + 4-amino-2-methyl-5-(diphosphooxymethyl)pyrimidine + 2 H(+) = thiamine phosphate + CO2 + diphosphate</text>
        <dbReference type="Rhea" id="RHEA:47844"/>
        <dbReference type="ChEBI" id="CHEBI:15378"/>
        <dbReference type="ChEBI" id="CHEBI:16526"/>
        <dbReference type="ChEBI" id="CHEBI:33019"/>
        <dbReference type="ChEBI" id="CHEBI:37575"/>
        <dbReference type="ChEBI" id="CHEBI:57841"/>
        <dbReference type="ChEBI" id="CHEBI:62899"/>
        <dbReference type="EC" id="2.5.1.3"/>
    </reaction>
</comment>
<comment type="catalytic activity">
    <reaction evidence="1">
        <text>2-(2-carboxy-4-methylthiazol-5-yl)ethyl phosphate + 4-amino-2-methyl-5-(diphosphooxymethyl)pyrimidine + 2 H(+) = thiamine phosphate + CO2 + diphosphate</text>
        <dbReference type="Rhea" id="RHEA:47848"/>
        <dbReference type="ChEBI" id="CHEBI:15378"/>
        <dbReference type="ChEBI" id="CHEBI:16526"/>
        <dbReference type="ChEBI" id="CHEBI:33019"/>
        <dbReference type="ChEBI" id="CHEBI:37575"/>
        <dbReference type="ChEBI" id="CHEBI:57841"/>
        <dbReference type="ChEBI" id="CHEBI:62890"/>
        <dbReference type="EC" id="2.5.1.3"/>
    </reaction>
</comment>
<comment type="catalytic activity">
    <reaction evidence="1">
        <text>4-methyl-5-(2-phosphooxyethyl)-thiazole + 4-amino-2-methyl-5-(diphosphooxymethyl)pyrimidine + H(+) = thiamine phosphate + diphosphate</text>
        <dbReference type="Rhea" id="RHEA:22328"/>
        <dbReference type="ChEBI" id="CHEBI:15378"/>
        <dbReference type="ChEBI" id="CHEBI:33019"/>
        <dbReference type="ChEBI" id="CHEBI:37575"/>
        <dbReference type="ChEBI" id="CHEBI:57841"/>
        <dbReference type="ChEBI" id="CHEBI:58296"/>
        <dbReference type="EC" id="2.5.1.3"/>
    </reaction>
</comment>
<comment type="cofactor">
    <cofactor evidence="1">
        <name>Mg(2+)</name>
        <dbReference type="ChEBI" id="CHEBI:18420"/>
    </cofactor>
    <text evidence="1">Binds 1 Mg(2+) ion per subunit.</text>
</comment>
<comment type="pathway">
    <text evidence="1">Cofactor biosynthesis; thiamine diphosphate biosynthesis; thiamine phosphate from 4-amino-2-methyl-5-diphosphomethylpyrimidine and 4-methyl-5-(2-phosphoethyl)-thiazole: step 1/1.</text>
</comment>
<comment type="similarity">
    <text evidence="1">Belongs to the thiamine-phosphate synthase family.</text>
</comment>
<reference key="1">
    <citation type="journal article" date="2010" name="BMC Genomics">
        <title>A genomic perspective on the potential of Actinobacillus succinogenes for industrial succinate production.</title>
        <authorList>
            <person name="McKinlay J.B."/>
            <person name="Laivenieks M."/>
            <person name="Schindler B.D."/>
            <person name="McKinlay A.A."/>
            <person name="Siddaramappa S."/>
            <person name="Challacombe J.F."/>
            <person name="Lowry S.R."/>
            <person name="Clum A."/>
            <person name="Lapidus A.L."/>
            <person name="Burkhart K.B."/>
            <person name="Harkins V."/>
            <person name="Vieille C."/>
        </authorList>
    </citation>
    <scope>NUCLEOTIDE SEQUENCE [LARGE SCALE GENOMIC DNA]</scope>
    <source>
        <strain>ATCC 55618 / DSM 22257 / CCUG 43843 / 130Z</strain>
    </source>
</reference>
<organism>
    <name type="scientific">Actinobacillus succinogenes (strain ATCC 55618 / DSM 22257 / CCUG 43843 / 130Z)</name>
    <dbReference type="NCBI Taxonomy" id="339671"/>
    <lineage>
        <taxon>Bacteria</taxon>
        <taxon>Pseudomonadati</taxon>
        <taxon>Pseudomonadota</taxon>
        <taxon>Gammaproteobacteria</taxon>
        <taxon>Pasteurellales</taxon>
        <taxon>Pasteurellaceae</taxon>
        <taxon>Actinobacillus</taxon>
    </lineage>
</organism>